<keyword id="KW-0240">DNA-directed RNA polymerase</keyword>
<keyword id="KW-0460">Magnesium</keyword>
<keyword id="KW-0479">Metal-binding</keyword>
<keyword id="KW-0548">Nucleotidyltransferase</keyword>
<keyword id="KW-0804">Transcription</keyword>
<keyword id="KW-0808">Transferase</keyword>
<keyword id="KW-0862">Zinc</keyword>
<dbReference type="EC" id="2.7.7.6" evidence="1"/>
<dbReference type="EMBL" id="CR626927">
    <property type="protein sequence ID" value="CAH09690.1"/>
    <property type="molecule type" value="Genomic_DNA"/>
</dbReference>
<dbReference type="RefSeq" id="WP_005791523.1">
    <property type="nucleotide sequence ID" value="NZ_UFTH01000001.1"/>
</dbReference>
<dbReference type="SMR" id="Q5L898"/>
<dbReference type="PaxDb" id="272559-BF9343_3909"/>
<dbReference type="GeneID" id="60369869"/>
<dbReference type="KEGG" id="bfs:BF9343_3909"/>
<dbReference type="eggNOG" id="COG0086">
    <property type="taxonomic scope" value="Bacteria"/>
</dbReference>
<dbReference type="HOGENOM" id="CLU_000524_3_1_10"/>
<dbReference type="Proteomes" id="UP000006731">
    <property type="component" value="Chromosome"/>
</dbReference>
<dbReference type="GO" id="GO:0000428">
    <property type="term" value="C:DNA-directed RNA polymerase complex"/>
    <property type="evidence" value="ECO:0007669"/>
    <property type="project" value="UniProtKB-KW"/>
</dbReference>
<dbReference type="GO" id="GO:0003677">
    <property type="term" value="F:DNA binding"/>
    <property type="evidence" value="ECO:0007669"/>
    <property type="project" value="UniProtKB-UniRule"/>
</dbReference>
<dbReference type="GO" id="GO:0003899">
    <property type="term" value="F:DNA-directed RNA polymerase activity"/>
    <property type="evidence" value="ECO:0007669"/>
    <property type="project" value="UniProtKB-UniRule"/>
</dbReference>
<dbReference type="GO" id="GO:0000287">
    <property type="term" value="F:magnesium ion binding"/>
    <property type="evidence" value="ECO:0007669"/>
    <property type="project" value="UniProtKB-UniRule"/>
</dbReference>
<dbReference type="GO" id="GO:0008270">
    <property type="term" value="F:zinc ion binding"/>
    <property type="evidence" value="ECO:0007669"/>
    <property type="project" value="UniProtKB-UniRule"/>
</dbReference>
<dbReference type="GO" id="GO:0006351">
    <property type="term" value="P:DNA-templated transcription"/>
    <property type="evidence" value="ECO:0007669"/>
    <property type="project" value="UniProtKB-UniRule"/>
</dbReference>
<dbReference type="CDD" id="cd02655">
    <property type="entry name" value="RNAP_beta'_C"/>
    <property type="match status" value="1"/>
</dbReference>
<dbReference type="CDD" id="cd01609">
    <property type="entry name" value="RNAP_beta'_N"/>
    <property type="match status" value="1"/>
</dbReference>
<dbReference type="Gene3D" id="1.10.132.30">
    <property type="match status" value="1"/>
</dbReference>
<dbReference type="Gene3D" id="1.10.150.390">
    <property type="match status" value="1"/>
</dbReference>
<dbReference type="Gene3D" id="1.10.1790.20">
    <property type="match status" value="1"/>
</dbReference>
<dbReference type="Gene3D" id="1.10.40.90">
    <property type="match status" value="1"/>
</dbReference>
<dbReference type="Gene3D" id="2.40.40.20">
    <property type="match status" value="1"/>
</dbReference>
<dbReference type="Gene3D" id="2.40.50.100">
    <property type="match status" value="3"/>
</dbReference>
<dbReference type="Gene3D" id="4.10.860.120">
    <property type="entry name" value="RNA polymerase II, clamp domain"/>
    <property type="match status" value="1"/>
</dbReference>
<dbReference type="Gene3D" id="1.10.274.100">
    <property type="entry name" value="RNA polymerase Rpb1, domain 3"/>
    <property type="match status" value="2"/>
</dbReference>
<dbReference type="HAMAP" id="MF_01322">
    <property type="entry name" value="RNApol_bact_RpoC"/>
    <property type="match status" value="1"/>
</dbReference>
<dbReference type="InterPro" id="IPR045867">
    <property type="entry name" value="DNA-dir_RpoC_beta_prime"/>
</dbReference>
<dbReference type="InterPro" id="IPR012754">
    <property type="entry name" value="DNA-dir_RpoC_beta_prime_bact"/>
</dbReference>
<dbReference type="InterPro" id="IPR000722">
    <property type="entry name" value="RNA_pol_asu"/>
</dbReference>
<dbReference type="InterPro" id="IPR006592">
    <property type="entry name" value="RNA_pol_N"/>
</dbReference>
<dbReference type="InterPro" id="IPR007080">
    <property type="entry name" value="RNA_pol_Rpb1_1"/>
</dbReference>
<dbReference type="InterPro" id="IPR007066">
    <property type="entry name" value="RNA_pol_Rpb1_3"/>
</dbReference>
<dbReference type="InterPro" id="IPR042102">
    <property type="entry name" value="RNA_pol_Rpb1_3_sf"/>
</dbReference>
<dbReference type="InterPro" id="IPR007083">
    <property type="entry name" value="RNA_pol_Rpb1_4"/>
</dbReference>
<dbReference type="InterPro" id="IPR007081">
    <property type="entry name" value="RNA_pol_Rpb1_5"/>
</dbReference>
<dbReference type="InterPro" id="IPR044893">
    <property type="entry name" value="RNA_pol_Rpb1_clamp_domain"/>
</dbReference>
<dbReference type="InterPro" id="IPR038120">
    <property type="entry name" value="Rpb1_funnel_sf"/>
</dbReference>
<dbReference type="NCBIfam" id="TIGR02386">
    <property type="entry name" value="rpoC_TIGR"/>
    <property type="match status" value="1"/>
</dbReference>
<dbReference type="PANTHER" id="PTHR19376">
    <property type="entry name" value="DNA-DIRECTED RNA POLYMERASE"/>
    <property type="match status" value="1"/>
</dbReference>
<dbReference type="PANTHER" id="PTHR19376:SF54">
    <property type="entry name" value="DNA-DIRECTED RNA POLYMERASE SUBUNIT BETA"/>
    <property type="match status" value="1"/>
</dbReference>
<dbReference type="Pfam" id="PF04997">
    <property type="entry name" value="RNA_pol_Rpb1_1"/>
    <property type="match status" value="1"/>
</dbReference>
<dbReference type="Pfam" id="PF00623">
    <property type="entry name" value="RNA_pol_Rpb1_2"/>
    <property type="match status" value="2"/>
</dbReference>
<dbReference type="Pfam" id="PF04983">
    <property type="entry name" value="RNA_pol_Rpb1_3"/>
    <property type="match status" value="1"/>
</dbReference>
<dbReference type="Pfam" id="PF05000">
    <property type="entry name" value="RNA_pol_Rpb1_4"/>
    <property type="match status" value="1"/>
</dbReference>
<dbReference type="Pfam" id="PF04998">
    <property type="entry name" value="RNA_pol_Rpb1_5"/>
    <property type="match status" value="1"/>
</dbReference>
<dbReference type="SMART" id="SM00663">
    <property type="entry name" value="RPOLA_N"/>
    <property type="match status" value="1"/>
</dbReference>
<dbReference type="SUPFAM" id="SSF64484">
    <property type="entry name" value="beta and beta-prime subunits of DNA dependent RNA-polymerase"/>
    <property type="match status" value="1"/>
</dbReference>
<evidence type="ECO:0000255" key="1">
    <source>
        <dbReference type="HAMAP-Rule" id="MF_01322"/>
    </source>
</evidence>
<sequence>MAFRKENKIKSNFSKISIGLASPEEILENSSGEVLKPETINYRTYKPERDGLFCERIFGPIKDYECHCGKYKRIRYKGIVCDRCGVEVTEKKVRRERMGHIQLVVPVAHIWYFRSLPNKIGYLLGLPTKKLDSIIYYERYVVIQPGVKAEDGIAEFDLLSEEEYLDILDTLPKDNQYLEDTDPNKFIAKMGAEAIYDLLARLDLDALSYELRHRAGNDASQQRKNEALKRLQVVESFRASRGRNKPEWMIVRIVPVIPPELRPLVPLDGGRFATSDLNDLYRRVIIRNNRLKRLIEIKAPEVILRNEKRMLQESVDSLFDNSRKSSAVKTDANRPLKSLSDSLKGKQGRFRQNLLGKRVDYSARSVIVVGPELRMHECGIPKLMAAELYKPFIIRKLIERGIVKTVKSAKKIVDRKEPVIWDILEHVMKGHPVLLNRAPTLHRLGIQAFQPKMIEGKAIQLHPLACTAFNADFDGDQMAVHLPLSNEAVLEAQMLMLASHNILNPANGAPITVPSQDMVLGLYYITKLRKGAKGEGLTFYGPEEALIAYNEGKVDIHAPVKVIVKDLDENGNIVDVMRETSVGRVIVNEIVPPEVGYINTIISKKSLRDIISAVIKACGVARTADFLDGIKNLGYKMAFQGGLSFNLGDIIIPKEKETLVQRGYEEVEQVINNYNMGFITNNERYNQVIDIWTHVNSELSNILMKTISSDDQGFNSVYMMLDSGARGSKEQIRQLSGMRGLMAKPQKAGAEGGQIIENPILSNFKEGLSVLEYFISTHGARKGLADTALKTADAGYLTRRLVDVSHDVIINEEDCGTLRGLVCTDLKNNDEVIATLYERILGRVSVHDIIHPQTGELLVAGGEEITEDIAKKIQESPIESVEIRSVLTCESKKGVCAKCYGRNLATNHMVQKGEAVGVIAAQSIGEPGTQLTLRTFHAGGTAANIAANASIVAKNNARLEFEELRTVDIVDETGEAAKVVVGRLAEVRFIDVNTGIVLSTHNVPYGSTLYVADGEVVEKGKLIAKWDPFNAVIITEATGKIEFEGVIENVTYKIESDEATGLREIIIIESKDKTKVPSAHILTEDGDLIRTYNLPVGGHVVIENGQKVKAGEVIVKIPRAVGKAGDITGGLPRVTELFEARNPSNPAVVSEIDGEVTMGKVKRGNREIIVTSKTGEVKKYLVPLSKQILVQENDYVRAGTPLSDGATTPADILAIKGPTAVQEYIVNEVQDVYRLQGVKINDKHFEIIVRQMMRKVTIDEPGDTRFLEQQVVDKLEFMEENDRIWGKKVVVDAGDSENLKAGQIVTARKLRDENSMLKRRDLKPVEVRDAVAATSTQILQGITRAALQTSSFMSAASFQETTKVLNEAAINGKIDKLEGMKENVICGHLIPAGTGLREFDKIIVGSKEEYDRILANKKTVLDYNEVE</sequence>
<feature type="chain" id="PRO_0000225512" description="DNA-directed RNA polymerase subunit beta'">
    <location>
        <begin position="1"/>
        <end position="1427"/>
    </location>
</feature>
<feature type="binding site" evidence="1">
    <location>
        <position position="66"/>
    </location>
    <ligand>
        <name>Zn(2+)</name>
        <dbReference type="ChEBI" id="CHEBI:29105"/>
        <label>1</label>
    </ligand>
</feature>
<feature type="binding site" evidence="1">
    <location>
        <position position="68"/>
    </location>
    <ligand>
        <name>Zn(2+)</name>
        <dbReference type="ChEBI" id="CHEBI:29105"/>
        <label>1</label>
    </ligand>
</feature>
<feature type="binding site" evidence="1">
    <location>
        <position position="81"/>
    </location>
    <ligand>
        <name>Zn(2+)</name>
        <dbReference type="ChEBI" id="CHEBI:29105"/>
        <label>1</label>
    </ligand>
</feature>
<feature type="binding site" evidence="1">
    <location>
        <position position="84"/>
    </location>
    <ligand>
        <name>Zn(2+)</name>
        <dbReference type="ChEBI" id="CHEBI:29105"/>
        <label>1</label>
    </ligand>
</feature>
<feature type="binding site" evidence="1">
    <location>
        <position position="472"/>
    </location>
    <ligand>
        <name>Mg(2+)</name>
        <dbReference type="ChEBI" id="CHEBI:18420"/>
    </ligand>
</feature>
<feature type="binding site" evidence="1">
    <location>
        <position position="474"/>
    </location>
    <ligand>
        <name>Mg(2+)</name>
        <dbReference type="ChEBI" id="CHEBI:18420"/>
    </ligand>
</feature>
<feature type="binding site" evidence="1">
    <location>
        <position position="476"/>
    </location>
    <ligand>
        <name>Mg(2+)</name>
        <dbReference type="ChEBI" id="CHEBI:18420"/>
    </ligand>
</feature>
<feature type="binding site" evidence="1">
    <location>
        <position position="815"/>
    </location>
    <ligand>
        <name>Zn(2+)</name>
        <dbReference type="ChEBI" id="CHEBI:29105"/>
        <label>2</label>
    </ligand>
</feature>
<feature type="binding site" evidence="1">
    <location>
        <position position="889"/>
    </location>
    <ligand>
        <name>Zn(2+)</name>
        <dbReference type="ChEBI" id="CHEBI:29105"/>
        <label>2</label>
    </ligand>
</feature>
<feature type="binding site" evidence="1">
    <location>
        <position position="896"/>
    </location>
    <ligand>
        <name>Zn(2+)</name>
        <dbReference type="ChEBI" id="CHEBI:29105"/>
        <label>2</label>
    </ligand>
</feature>
<feature type="binding site" evidence="1">
    <location>
        <position position="899"/>
    </location>
    <ligand>
        <name>Zn(2+)</name>
        <dbReference type="ChEBI" id="CHEBI:29105"/>
        <label>2</label>
    </ligand>
</feature>
<comment type="function">
    <text evidence="1">DNA-dependent RNA polymerase catalyzes the transcription of DNA into RNA using the four ribonucleoside triphosphates as substrates.</text>
</comment>
<comment type="catalytic activity">
    <reaction evidence="1">
        <text>RNA(n) + a ribonucleoside 5'-triphosphate = RNA(n+1) + diphosphate</text>
        <dbReference type="Rhea" id="RHEA:21248"/>
        <dbReference type="Rhea" id="RHEA-COMP:14527"/>
        <dbReference type="Rhea" id="RHEA-COMP:17342"/>
        <dbReference type="ChEBI" id="CHEBI:33019"/>
        <dbReference type="ChEBI" id="CHEBI:61557"/>
        <dbReference type="ChEBI" id="CHEBI:140395"/>
        <dbReference type="EC" id="2.7.7.6"/>
    </reaction>
</comment>
<comment type="cofactor">
    <cofactor evidence="1">
        <name>Mg(2+)</name>
        <dbReference type="ChEBI" id="CHEBI:18420"/>
    </cofactor>
    <text evidence="1">Binds 1 Mg(2+) ion per subunit.</text>
</comment>
<comment type="cofactor">
    <cofactor evidence="1">
        <name>Zn(2+)</name>
        <dbReference type="ChEBI" id="CHEBI:29105"/>
    </cofactor>
    <text evidence="1">Binds 2 Zn(2+) ions per subunit.</text>
</comment>
<comment type="subunit">
    <text evidence="1">The RNAP catalytic core consists of 2 alpha, 1 beta, 1 beta' and 1 omega subunit. When a sigma factor is associated with the core the holoenzyme is formed, which can initiate transcription.</text>
</comment>
<comment type="similarity">
    <text evidence="1">Belongs to the RNA polymerase beta' chain family.</text>
</comment>
<protein>
    <recommendedName>
        <fullName evidence="1">DNA-directed RNA polymerase subunit beta'</fullName>
        <shortName evidence="1">RNAP subunit beta'</shortName>
        <ecNumber evidence="1">2.7.7.6</ecNumber>
    </recommendedName>
    <alternativeName>
        <fullName evidence="1">RNA polymerase subunit beta'</fullName>
    </alternativeName>
    <alternativeName>
        <fullName evidence="1">Transcriptase subunit beta'</fullName>
    </alternativeName>
</protein>
<organism>
    <name type="scientific">Bacteroides fragilis (strain ATCC 25285 / DSM 2151 / CCUG 4856 / JCM 11019 / LMG 10263 / NCTC 9343 / Onslow / VPI 2553 / EN-2)</name>
    <dbReference type="NCBI Taxonomy" id="272559"/>
    <lineage>
        <taxon>Bacteria</taxon>
        <taxon>Pseudomonadati</taxon>
        <taxon>Bacteroidota</taxon>
        <taxon>Bacteroidia</taxon>
        <taxon>Bacteroidales</taxon>
        <taxon>Bacteroidaceae</taxon>
        <taxon>Bacteroides</taxon>
    </lineage>
</organism>
<proteinExistence type="inferred from homology"/>
<accession>Q5L898</accession>
<name>RPOC_BACFN</name>
<gene>
    <name evidence="1" type="primary">rpoC</name>
    <name type="ordered locus">BF4014</name>
</gene>
<reference key="1">
    <citation type="journal article" date="2005" name="Science">
        <title>Extensive DNA inversions in the B. fragilis genome control variable gene expression.</title>
        <authorList>
            <person name="Cerdeno-Tarraga A.-M."/>
            <person name="Patrick S."/>
            <person name="Crossman L.C."/>
            <person name="Blakely G."/>
            <person name="Abratt V."/>
            <person name="Lennard N."/>
            <person name="Poxton I."/>
            <person name="Duerden B."/>
            <person name="Harris B."/>
            <person name="Quail M.A."/>
            <person name="Barron A."/>
            <person name="Clark L."/>
            <person name="Corton C."/>
            <person name="Doggett J."/>
            <person name="Holden M.T.G."/>
            <person name="Larke N."/>
            <person name="Line A."/>
            <person name="Lord A."/>
            <person name="Norbertczak H."/>
            <person name="Ormond D."/>
            <person name="Price C."/>
            <person name="Rabbinowitsch E."/>
            <person name="Woodward J."/>
            <person name="Barrell B.G."/>
            <person name="Parkhill J."/>
        </authorList>
    </citation>
    <scope>NUCLEOTIDE SEQUENCE [LARGE SCALE GENOMIC DNA]</scope>
    <source>
        <strain>ATCC 25285 / DSM 2151 / CCUG 4856 / JCM 11019 / LMG 10263 / NCTC 9343 / Onslow / VPI 2553 / EN-2</strain>
    </source>
</reference>